<protein>
    <recommendedName>
        <fullName evidence="1">Alanine--tRNA ligase</fullName>
        <ecNumber evidence="1">6.1.1.7</ecNumber>
    </recommendedName>
    <alternativeName>
        <fullName evidence="1">Alanyl-tRNA synthetase</fullName>
        <shortName evidence="1">AlaRS</shortName>
    </alternativeName>
</protein>
<accession>Q56648</accession>
<accession>Q9KUH6</accession>
<organism>
    <name type="scientific">Vibrio cholerae serotype O1 (strain ATCC 39315 / El Tor Inaba N16961)</name>
    <dbReference type="NCBI Taxonomy" id="243277"/>
    <lineage>
        <taxon>Bacteria</taxon>
        <taxon>Pseudomonadati</taxon>
        <taxon>Pseudomonadota</taxon>
        <taxon>Gammaproteobacteria</taxon>
        <taxon>Vibrionales</taxon>
        <taxon>Vibrionaceae</taxon>
        <taxon>Vibrio</taxon>
    </lineage>
</organism>
<feature type="chain" id="PRO_0000075241" description="Alanine--tRNA ligase">
    <location>
        <begin position="1"/>
        <end position="860"/>
    </location>
</feature>
<feature type="binding site" evidence="1">
    <location>
        <position position="563"/>
    </location>
    <ligand>
        <name>Zn(2+)</name>
        <dbReference type="ChEBI" id="CHEBI:29105"/>
    </ligand>
</feature>
<feature type="binding site" evidence="1">
    <location>
        <position position="567"/>
    </location>
    <ligand>
        <name>Zn(2+)</name>
        <dbReference type="ChEBI" id="CHEBI:29105"/>
    </ligand>
</feature>
<feature type="binding site" evidence="1">
    <location>
        <position position="665"/>
    </location>
    <ligand>
        <name>Zn(2+)</name>
        <dbReference type="ChEBI" id="CHEBI:29105"/>
    </ligand>
</feature>
<feature type="binding site" evidence="1">
    <location>
        <position position="669"/>
    </location>
    <ligand>
        <name>Zn(2+)</name>
        <dbReference type="ChEBI" id="CHEBI:29105"/>
    </ligand>
</feature>
<proteinExistence type="inferred from homology"/>
<sequence>MFMSTDEVRRAFLSFFESKGHQIVESSSLVPANDPTLLFTNAGMNQFKDCFLGLEKRAYTRATTAQRCVRAGGKHNDLENVGFTARHHTFFEMLGNFSFGDYFKEDAIQYAWEFLTDVLQLPKERLLVTVYETDDEAFDIWNKKVGIPADRIIRIGDKKGGKKFDSDNFWQMGDTGPCGPCTEIFYDHGDHIWGGPPGSPEEDGDRFIEIWNNVFMQFNRHADGTMEPLPKPSVDTGMGIERISAIMQGVHSNYEIDVFQTLIKAAADAIGYQDLTNQSLRVVADHIRSCAFLIVDGVMPSNEGRGYVLRRIIRRAVRHGNKLGAQGAFFHKLVGPLAEVMGTAGVELKKQQALVEKVLRIEEENFGRTLDRGMSILNDALDQLSGQVLDGETVFKLYDTYGFPADLTNDVARERGFSIDEAGFEQAMEEQRQRAREAGQFGTDYNSLIKSATNTEFCGYTASRGQSVVREMFVEGAEVSTLSAGDKAIIVLDNTPFYAESGGQCGDTGVLKTDAGIFHVEDTQKLGNAIAHHGVIAQGVLATGDQVDAIVDEKRRAAISLNHSATHLLHAALRKVLGEHVAQKGSLVRAETLRFDFSHLEAMTAAEIKEVERLVNQEVRRNHSIETNIMNIDEAKAKGAMALFGEKYDDQVRVLSMGDFSTELCGGIHASNTGDIGLFKIISEGGIAAGIRRIEAVTGEGALDYLDAQQAQHDAKVSEMAAKAKLLEKEIQQLKDKLAAKESAGLINQVKQIAGVNVLVAQLNGADNKALRGMVDDLKNQLSSGIIMLGNVAEGKVGLIAGVTNDLTNKVKAGELVNMVALQVGGKGGGRPDMAQAGGTDAHALPSALESVDAWIAERL</sequence>
<evidence type="ECO:0000255" key="1">
    <source>
        <dbReference type="HAMAP-Rule" id="MF_00036"/>
    </source>
</evidence>
<evidence type="ECO:0000305" key="2"/>
<dbReference type="EC" id="6.1.1.7" evidence="1"/>
<dbReference type="EMBL" id="AE003852">
    <property type="protein sequence ID" value="AAF93713.1"/>
    <property type="molecule type" value="Genomic_DNA"/>
</dbReference>
<dbReference type="EMBL" id="L78074">
    <property type="protein sequence ID" value="AAA99922.1"/>
    <property type="status" value="ALT_FRAME"/>
    <property type="molecule type" value="Genomic_DNA"/>
</dbReference>
<dbReference type="PIR" id="G82310">
    <property type="entry name" value="G82310"/>
</dbReference>
<dbReference type="RefSeq" id="NP_230196.1">
    <property type="nucleotide sequence ID" value="NC_002505.1"/>
</dbReference>
<dbReference type="RefSeq" id="WP_000481017.1">
    <property type="nucleotide sequence ID" value="NZ_LT906614.1"/>
</dbReference>
<dbReference type="SMR" id="Q56648"/>
<dbReference type="STRING" id="243277.VC_0545"/>
<dbReference type="DNASU" id="2615214"/>
<dbReference type="EnsemblBacteria" id="AAF93713">
    <property type="protein sequence ID" value="AAF93713"/>
    <property type="gene ID" value="VC_0545"/>
</dbReference>
<dbReference type="KEGG" id="vch:VC_0545"/>
<dbReference type="PATRIC" id="fig|243277.26.peg.521"/>
<dbReference type="eggNOG" id="COG0013">
    <property type="taxonomic scope" value="Bacteria"/>
</dbReference>
<dbReference type="HOGENOM" id="CLU_004485_1_1_6"/>
<dbReference type="Proteomes" id="UP000000584">
    <property type="component" value="Chromosome 1"/>
</dbReference>
<dbReference type="GO" id="GO:0005829">
    <property type="term" value="C:cytosol"/>
    <property type="evidence" value="ECO:0000318"/>
    <property type="project" value="GO_Central"/>
</dbReference>
<dbReference type="GO" id="GO:0004813">
    <property type="term" value="F:alanine-tRNA ligase activity"/>
    <property type="evidence" value="ECO:0000318"/>
    <property type="project" value="GO_Central"/>
</dbReference>
<dbReference type="GO" id="GO:0002161">
    <property type="term" value="F:aminoacyl-tRNA deacylase activity"/>
    <property type="evidence" value="ECO:0000318"/>
    <property type="project" value="GO_Central"/>
</dbReference>
<dbReference type="GO" id="GO:0005524">
    <property type="term" value="F:ATP binding"/>
    <property type="evidence" value="ECO:0007669"/>
    <property type="project" value="UniProtKB-UniRule"/>
</dbReference>
<dbReference type="GO" id="GO:0000049">
    <property type="term" value="F:tRNA binding"/>
    <property type="evidence" value="ECO:0007669"/>
    <property type="project" value="UniProtKB-KW"/>
</dbReference>
<dbReference type="GO" id="GO:0008270">
    <property type="term" value="F:zinc ion binding"/>
    <property type="evidence" value="ECO:0007669"/>
    <property type="project" value="UniProtKB-UniRule"/>
</dbReference>
<dbReference type="GO" id="GO:0006419">
    <property type="term" value="P:alanyl-tRNA aminoacylation"/>
    <property type="evidence" value="ECO:0000318"/>
    <property type="project" value="GO_Central"/>
</dbReference>
<dbReference type="GO" id="GO:0045892">
    <property type="term" value="P:negative regulation of DNA-templated transcription"/>
    <property type="evidence" value="ECO:0000318"/>
    <property type="project" value="GO_Central"/>
</dbReference>
<dbReference type="CDD" id="cd00673">
    <property type="entry name" value="AlaRS_core"/>
    <property type="match status" value="1"/>
</dbReference>
<dbReference type="FunFam" id="2.40.30.130:FF:000001">
    <property type="entry name" value="Alanine--tRNA ligase"/>
    <property type="match status" value="1"/>
</dbReference>
<dbReference type="FunFam" id="3.10.310.40:FF:000001">
    <property type="entry name" value="Alanine--tRNA ligase"/>
    <property type="match status" value="1"/>
</dbReference>
<dbReference type="FunFam" id="3.30.54.20:FF:000001">
    <property type="entry name" value="Alanine--tRNA ligase"/>
    <property type="match status" value="1"/>
</dbReference>
<dbReference type="FunFam" id="3.30.930.10:FF:000004">
    <property type="entry name" value="Alanine--tRNA ligase"/>
    <property type="match status" value="1"/>
</dbReference>
<dbReference type="FunFam" id="3.30.980.10:FF:000004">
    <property type="entry name" value="Alanine--tRNA ligase, cytoplasmic"/>
    <property type="match status" value="1"/>
</dbReference>
<dbReference type="Gene3D" id="2.40.30.130">
    <property type="match status" value="1"/>
</dbReference>
<dbReference type="Gene3D" id="3.10.310.40">
    <property type="match status" value="1"/>
</dbReference>
<dbReference type="Gene3D" id="3.30.54.20">
    <property type="match status" value="1"/>
</dbReference>
<dbReference type="Gene3D" id="3.30.930.10">
    <property type="entry name" value="Bira Bifunctional Protein, Domain 2"/>
    <property type="match status" value="1"/>
</dbReference>
<dbReference type="Gene3D" id="3.30.980.10">
    <property type="entry name" value="Threonyl-trna Synthetase, Chain A, domain 2"/>
    <property type="match status" value="1"/>
</dbReference>
<dbReference type="HAMAP" id="MF_00036_B">
    <property type="entry name" value="Ala_tRNA_synth_B"/>
    <property type="match status" value="1"/>
</dbReference>
<dbReference type="InterPro" id="IPR045864">
    <property type="entry name" value="aa-tRNA-synth_II/BPL/LPL"/>
</dbReference>
<dbReference type="InterPro" id="IPR002318">
    <property type="entry name" value="Ala-tRNA-lgiase_IIc"/>
</dbReference>
<dbReference type="InterPro" id="IPR018162">
    <property type="entry name" value="Ala-tRNA-ligase_IIc_anticod-bd"/>
</dbReference>
<dbReference type="InterPro" id="IPR018165">
    <property type="entry name" value="Ala-tRNA-synth_IIc_core"/>
</dbReference>
<dbReference type="InterPro" id="IPR018164">
    <property type="entry name" value="Ala-tRNA-synth_IIc_N"/>
</dbReference>
<dbReference type="InterPro" id="IPR050058">
    <property type="entry name" value="Ala-tRNA_ligase"/>
</dbReference>
<dbReference type="InterPro" id="IPR023033">
    <property type="entry name" value="Ala_tRNA_ligase_euk/bac"/>
</dbReference>
<dbReference type="InterPro" id="IPR003156">
    <property type="entry name" value="DHHA1_dom"/>
</dbReference>
<dbReference type="InterPro" id="IPR018163">
    <property type="entry name" value="Thr/Ala-tRNA-synth_IIc_edit"/>
</dbReference>
<dbReference type="InterPro" id="IPR009000">
    <property type="entry name" value="Transl_B-barrel_sf"/>
</dbReference>
<dbReference type="InterPro" id="IPR012947">
    <property type="entry name" value="tRNA_SAD"/>
</dbReference>
<dbReference type="NCBIfam" id="TIGR00344">
    <property type="entry name" value="alaS"/>
    <property type="match status" value="1"/>
</dbReference>
<dbReference type="PANTHER" id="PTHR11777:SF9">
    <property type="entry name" value="ALANINE--TRNA LIGASE, CYTOPLASMIC"/>
    <property type="match status" value="1"/>
</dbReference>
<dbReference type="PANTHER" id="PTHR11777">
    <property type="entry name" value="ALANYL-TRNA SYNTHETASE"/>
    <property type="match status" value="1"/>
</dbReference>
<dbReference type="Pfam" id="PF02272">
    <property type="entry name" value="DHHA1"/>
    <property type="match status" value="1"/>
</dbReference>
<dbReference type="Pfam" id="PF01411">
    <property type="entry name" value="tRNA-synt_2c"/>
    <property type="match status" value="1"/>
</dbReference>
<dbReference type="Pfam" id="PF07973">
    <property type="entry name" value="tRNA_SAD"/>
    <property type="match status" value="1"/>
</dbReference>
<dbReference type="PRINTS" id="PR00980">
    <property type="entry name" value="TRNASYNTHALA"/>
</dbReference>
<dbReference type="SMART" id="SM00863">
    <property type="entry name" value="tRNA_SAD"/>
    <property type="match status" value="1"/>
</dbReference>
<dbReference type="SUPFAM" id="SSF55681">
    <property type="entry name" value="Class II aaRS and biotin synthetases"/>
    <property type="match status" value="1"/>
</dbReference>
<dbReference type="SUPFAM" id="SSF101353">
    <property type="entry name" value="Putative anticodon-binding domain of alanyl-tRNA synthetase (AlaRS)"/>
    <property type="match status" value="1"/>
</dbReference>
<dbReference type="SUPFAM" id="SSF55186">
    <property type="entry name" value="ThrRS/AlaRS common domain"/>
    <property type="match status" value="1"/>
</dbReference>
<dbReference type="SUPFAM" id="SSF50447">
    <property type="entry name" value="Translation proteins"/>
    <property type="match status" value="1"/>
</dbReference>
<dbReference type="PROSITE" id="PS50860">
    <property type="entry name" value="AA_TRNA_LIGASE_II_ALA"/>
    <property type="match status" value="1"/>
</dbReference>
<reference key="1">
    <citation type="journal article" date="2000" name="Nature">
        <title>DNA sequence of both chromosomes of the cholera pathogen Vibrio cholerae.</title>
        <authorList>
            <person name="Heidelberg J.F."/>
            <person name="Eisen J.A."/>
            <person name="Nelson W.C."/>
            <person name="Clayton R.A."/>
            <person name="Gwinn M.L."/>
            <person name="Dodson R.J."/>
            <person name="Haft D.H."/>
            <person name="Hickey E.K."/>
            <person name="Peterson J.D."/>
            <person name="Umayam L.A."/>
            <person name="Gill S.R."/>
            <person name="Nelson K.E."/>
            <person name="Read T.D."/>
            <person name="Tettelin H."/>
            <person name="Richardson D.L."/>
            <person name="Ermolaeva M.D."/>
            <person name="Vamathevan J.J."/>
            <person name="Bass S."/>
            <person name="Qin H."/>
            <person name="Dragoi I."/>
            <person name="Sellers P."/>
            <person name="McDonald L.A."/>
            <person name="Utterback T.R."/>
            <person name="Fleischmann R.D."/>
            <person name="Nierman W.C."/>
            <person name="White O."/>
            <person name="Salzberg S.L."/>
            <person name="Smith H.O."/>
            <person name="Colwell R.R."/>
            <person name="Mekalanos J.J."/>
            <person name="Venter J.C."/>
            <person name="Fraser C.M."/>
        </authorList>
    </citation>
    <scope>NUCLEOTIDE SEQUENCE [LARGE SCALE GENOMIC DNA]</scope>
    <source>
        <strain>ATCC 39315 / El Tor Inaba N16961</strain>
    </source>
</reference>
<reference key="2">
    <citation type="submission" date="1996-08" db="EMBL/GenBank/DDBJ databases">
        <authorList>
            <person name="Gupta N."/>
            <person name="Bhasin N."/>
            <person name="Ghosh A."/>
        </authorList>
    </citation>
    <scope>NUCLEOTIDE SEQUENCE [GENOMIC DNA] OF 44-452</scope>
    <source>
        <strain>ATCC 25870 / Classical Inaba 569B / Serotype O1</strain>
    </source>
</reference>
<gene>
    <name evidence="1" type="primary">alaS</name>
    <name type="ordered locus">VC_0545</name>
</gene>
<keyword id="KW-0030">Aminoacyl-tRNA synthetase</keyword>
<keyword id="KW-0067">ATP-binding</keyword>
<keyword id="KW-0963">Cytoplasm</keyword>
<keyword id="KW-0436">Ligase</keyword>
<keyword id="KW-0479">Metal-binding</keyword>
<keyword id="KW-0547">Nucleotide-binding</keyword>
<keyword id="KW-0648">Protein biosynthesis</keyword>
<keyword id="KW-1185">Reference proteome</keyword>
<keyword id="KW-0694">RNA-binding</keyword>
<keyword id="KW-0820">tRNA-binding</keyword>
<keyword id="KW-0862">Zinc</keyword>
<name>SYA_VIBCH</name>
<comment type="function">
    <text evidence="1">Catalyzes the attachment of alanine to tRNA(Ala) in a two-step reaction: alanine is first activated by ATP to form Ala-AMP and then transferred to the acceptor end of tRNA(Ala). Also edits incorrectly charged Ser-tRNA(Ala) and Gly-tRNA(Ala) via its editing domain.</text>
</comment>
<comment type="catalytic activity">
    <reaction evidence="1">
        <text>tRNA(Ala) + L-alanine + ATP = L-alanyl-tRNA(Ala) + AMP + diphosphate</text>
        <dbReference type="Rhea" id="RHEA:12540"/>
        <dbReference type="Rhea" id="RHEA-COMP:9657"/>
        <dbReference type="Rhea" id="RHEA-COMP:9923"/>
        <dbReference type="ChEBI" id="CHEBI:30616"/>
        <dbReference type="ChEBI" id="CHEBI:33019"/>
        <dbReference type="ChEBI" id="CHEBI:57972"/>
        <dbReference type="ChEBI" id="CHEBI:78442"/>
        <dbReference type="ChEBI" id="CHEBI:78497"/>
        <dbReference type="ChEBI" id="CHEBI:456215"/>
        <dbReference type="EC" id="6.1.1.7"/>
    </reaction>
</comment>
<comment type="cofactor">
    <cofactor evidence="1">
        <name>Zn(2+)</name>
        <dbReference type="ChEBI" id="CHEBI:29105"/>
    </cofactor>
    <text evidence="1">Binds 1 zinc ion per subunit.</text>
</comment>
<comment type="subcellular location">
    <subcellularLocation>
        <location evidence="1">Cytoplasm</location>
    </subcellularLocation>
</comment>
<comment type="domain">
    <text evidence="1">Consists of three domains; the N-terminal catalytic domain, the editing domain and the C-terminal C-Ala domain. The editing domain removes incorrectly charged amino acids, while the C-Ala domain, along with tRNA(Ala), serves as a bridge to cooperatively bring together the editing and aminoacylation centers thus stimulating deacylation of misacylated tRNAs.</text>
</comment>
<comment type="similarity">
    <text evidence="1">Belongs to the class-II aminoacyl-tRNA synthetase family.</text>
</comment>
<comment type="sequence caution" evidence="2">
    <conflict type="frameshift">
        <sequence resource="EMBL-CDS" id="AAA99922"/>
    </conflict>
</comment>